<proteinExistence type="inferred from homology"/>
<protein>
    <recommendedName>
        <fullName>Serine protease SplB</fullName>
        <ecNumber>3.4.21.-</ecNumber>
    </recommendedName>
</protein>
<feature type="signal peptide" evidence="1">
    <location>
        <begin position="1"/>
        <end position="36"/>
    </location>
</feature>
<feature type="chain" id="PRO_0000359550" description="Serine protease SplB">
    <location>
        <begin position="37"/>
        <end position="240"/>
    </location>
</feature>
<feature type="active site" description="Charge relay system" evidence="2">
    <location>
        <position position="75"/>
    </location>
</feature>
<feature type="active site" description="Charge relay system" evidence="2">
    <location>
        <position position="113"/>
    </location>
</feature>
<feature type="active site" description="Charge relay system" evidence="2">
    <location>
        <position position="193"/>
    </location>
</feature>
<sequence>MNKNVVIKSLAALTILTSVTGIGTTLVEEVQQTAKAENNVTKVKDTNIFPYTGVVAFKSATGFVVGKNTILTNKHVSKNYKVGDRITAHPNSDKGNGGIYSIKKIINYPGKEDVSVIQVEERAIERGPKGFNFNDNVTPFKYAAGAKAGERIKVIGYPHPYKNKYVLYESTGPVMSVEGSSIVYSAHTESGNSGSPVLNSNNELVGIHFASDVKNDDNRNAYGVYFTPEIKKFIAENIDK</sequence>
<organism>
    <name type="scientific">Staphylococcus aureus (strain USA300)</name>
    <dbReference type="NCBI Taxonomy" id="367830"/>
    <lineage>
        <taxon>Bacteria</taxon>
        <taxon>Bacillati</taxon>
        <taxon>Bacillota</taxon>
        <taxon>Bacilli</taxon>
        <taxon>Bacillales</taxon>
        <taxon>Staphylococcaceae</taxon>
        <taxon>Staphylococcus</taxon>
    </lineage>
</organism>
<comment type="function">
    <text evidence="1">Serine protease that cleaves specifically after the sequence Trp-Glu-Leu-Gln.</text>
</comment>
<comment type="subcellular location">
    <subcellularLocation>
        <location evidence="1">Secreted</location>
    </subcellularLocation>
</comment>
<comment type="similarity">
    <text evidence="3">Belongs to the peptidase S1B family.</text>
</comment>
<gene>
    <name type="primary">splB</name>
    <name type="ordered locus">SAUSA300_1757</name>
</gene>
<evidence type="ECO:0000250" key="1"/>
<evidence type="ECO:0000250" key="2">
    <source>
        <dbReference type="UniProtKB" id="Q2FXC3"/>
    </source>
</evidence>
<evidence type="ECO:0000305" key="3"/>
<reference key="1">
    <citation type="journal article" date="2006" name="Lancet">
        <title>Complete genome sequence of USA300, an epidemic clone of community-acquired meticillin-resistant Staphylococcus aureus.</title>
        <authorList>
            <person name="Diep B.A."/>
            <person name="Gill S.R."/>
            <person name="Chang R.F."/>
            <person name="Phan T.H."/>
            <person name="Chen J.H."/>
            <person name="Davidson M.G."/>
            <person name="Lin F."/>
            <person name="Lin J."/>
            <person name="Carleton H.A."/>
            <person name="Mongodin E.F."/>
            <person name="Sensabaugh G.F."/>
            <person name="Perdreau-Remington F."/>
        </authorList>
    </citation>
    <scope>NUCLEOTIDE SEQUENCE [LARGE SCALE GENOMIC DNA]</scope>
    <source>
        <strain>USA300</strain>
    </source>
</reference>
<keyword id="KW-0378">Hydrolase</keyword>
<keyword id="KW-0645">Protease</keyword>
<keyword id="KW-0964">Secreted</keyword>
<keyword id="KW-0720">Serine protease</keyword>
<keyword id="KW-0732">Signal</keyword>
<dbReference type="EC" id="3.4.21.-"/>
<dbReference type="EMBL" id="CP000255">
    <property type="protein sequence ID" value="ABD22137.1"/>
    <property type="molecule type" value="Genomic_DNA"/>
</dbReference>
<dbReference type="RefSeq" id="WP_001039447.1">
    <property type="nucleotide sequence ID" value="NZ_CP027476.1"/>
</dbReference>
<dbReference type="SMR" id="Q2FFT0"/>
<dbReference type="MEROPS" id="S01.282"/>
<dbReference type="KEGG" id="saa:SAUSA300_1757"/>
<dbReference type="HOGENOM" id="CLU_073589_2_0_9"/>
<dbReference type="OMA" id="NKYVLHE"/>
<dbReference type="Proteomes" id="UP000001939">
    <property type="component" value="Chromosome"/>
</dbReference>
<dbReference type="GO" id="GO:0005576">
    <property type="term" value="C:extracellular region"/>
    <property type="evidence" value="ECO:0007669"/>
    <property type="project" value="UniProtKB-SubCell"/>
</dbReference>
<dbReference type="GO" id="GO:0004252">
    <property type="term" value="F:serine-type endopeptidase activity"/>
    <property type="evidence" value="ECO:0007669"/>
    <property type="project" value="InterPro"/>
</dbReference>
<dbReference type="GO" id="GO:0006508">
    <property type="term" value="P:proteolysis"/>
    <property type="evidence" value="ECO:0007669"/>
    <property type="project" value="UniProtKB-KW"/>
</dbReference>
<dbReference type="Gene3D" id="2.40.10.10">
    <property type="entry name" value="Trypsin-like serine proteases"/>
    <property type="match status" value="2"/>
</dbReference>
<dbReference type="InterPro" id="IPR009003">
    <property type="entry name" value="Peptidase_S1_PA"/>
</dbReference>
<dbReference type="InterPro" id="IPR043504">
    <property type="entry name" value="Peptidase_S1_PA_chymotrypsin"/>
</dbReference>
<dbReference type="InterPro" id="IPR008256">
    <property type="entry name" value="Peptidase_S1B"/>
</dbReference>
<dbReference type="InterPro" id="IPR008353">
    <property type="entry name" value="Peptidase_S1B_tx"/>
</dbReference>
<dbReference type="InterPro" id="IPR001254">
    <property type="entry name" value="Trypsin_dom"/>
</dbReference>
<dbReference type="InterPro" id="IPR028301">
    <property type="entry name" value="V8_his_AS"/>
</dbReference>
<dbReference type="PANTHER" id="PTHR43019:SF23">
    <property type="entry name" value="PROTEASE DO-LIKE 5, CHLOROPLASTIC"/>
    <property type="match status" value="1"/>
</dbReference>
<dbReference type="PANTHER" id="PTHR43019">
    <property type="entry name" value="SERINE ENDOPROTEASE DEGS"/>
    <property type="match status" value="1"/>
</dbReference>
<dbReference type="Pfam" id="PF00089">
    <property type="entry name" value="Trypsin"/>
    <property type="match status" value="1"/>
</dbReference>
<dbReference type="PRINTS" id="PR01774">
    <property type="entry name" value="EXFOLTOXIN"/>
</dbReference>
<dbReference type="PRINTS" id="PR00839">
    <property type="entry name" value="V8PROTEASE"/>
</dbReference>
<dbReference type="SUPFAM" id="SSF50494">
    <property type="entry name" value="Trypsin-like serine proteases"/>
    <property type="match status" value="1"/>
</dbReference>
<dbReference type="PROSITE" id="PS00672">
    <property type="entry name" value="V8_HIS"/>
    <property type="match status" value="1"/>
</dbReference>
<accession>Q2FFT0</accession>
<name>SPLB_STAA3</name>